<accession>Q5T3U5</accession>
<accession>Q8NHX7</accession>
<accession>Q9H7N2</accession>
<accession>Q9NXY3</accession>
<accession>Q9UF48</accession>
<name>MRP7_HUMAN</name>
<comment type="function">
    <text evidence="5 7 8 13">ATP-dependent transporter of the ATP-binding cassette (ABC) family that actively extrudes physiological compounds, and xenobiotics from cells. Lipophilic anion transporter that mediates ATP-dependent transport of glucuronide conjugates such as estradiol-17-beta-o-glucuronide and GSH conjugates such as leukotriene C4 (LTC4) (PubMed:12527806, PubMed:15256465). May contribute to regulate the transport of organic compounds in testes across the blood-testis-barrier (Probable). Mediates multidrug resistance (MDR) in cancer cells by preventing the intracellular accumulation of certain antitumor drugs, such as, docetaxel and paclitaxel (PubMed:15256465, PubMed:23087055). Does not transport glycocholic acid, taurocholic acid, MTX, folic acid, cAMP, or cGMP (PubMed:12527806).</text>
</comment>
<comment type="catalytic activity">
    <reaction evidence="7 8">
        <text>ATP + H2O + xenobioticSide 1 = ADP + phosphate + xenobioticSide 2.</text>
        <dbReference type="EC" id="7.6.2.2"/>
    </reaction>
</comment>
<comment type="catalytic activity">
    <reaction evidence="8">
        <text>an S-substituted glutathione(in) + ATP + H2O = an S-substituted glutathione(out) + ADP + phosphate + H(+)</text>
        <dbReference type="Rhea" id="RHEA:19121"/>
        <dbReference type="ChEBI" id="CHEBI:15377"/>
        <dbReference type="ChEBI" id="CHEBI:15378"/>
        <dbReference type="ChEBI" id="CHEBI:30616"/>
        <dbReference type="ChEBI" id="CHEBI:43474"/>
        <dbReference type="ChEBI" id="CHEBI:90779"/>
        <dbReference type="ChEBI" id="CHEBI:456216"/>
        <dbReference type="EC" id="7.6.2.3"/>
    </reaction>
    <physiologicalReaction direction="left-to-right" evidence="12">
        <dbReference type="Rhea" id="RHEA:19122"/>
    </physiologicalReaction>
</comment>
<comment type="catalytic activity">
    <reaction evidence="5 8">
        <text>17beta-estradiol 17-O-(beta-D-glucuronate)(in) + ATP + H2O = 17beta-estradiol 17-O-(beta-D-glucuronate)(out) + ADP + phosphate + H(+)</text>
        <dbReference type="Rhea" id="RHEA:60128"/>
        <dbReference type="ChEBI" id="CHEBI:15377"/>
        <dbReference type="ChEBI" id="CHEBI:15378"/>
        <dbReference type="ChEBI" id="CHEBI:30616"/>
        <dbReference type="ChEBI" id="CHEBI:43474"/>
        <dbReference type="ChEBI" id="CHEBI:82961"/>
        <dbReference type="ChEBI" id="CHEBI:456216"/>
    </reaction>
    <physiologicalReaction direction="left-to-right" evidence="12">
        <dbReference type="Rhea" id="RHEA:60129"/>
    </physiologicalReaction>
</comment>
<comment type="catalytic activity">
    <reaction evidence="8">
        <text>leukotriene C4(in) + ATP + H2O = leukotriene C4(out) + ADP + phosphate + H(+)</text>
        <dbReference type="Rhea" id="RHEA:38963"/>
        <dbReference type="ChEBI" id="CHEBI:15377"/>
        <dbReference type="ChEBI" id="CHEBI:15378"/>
        <dbReference type="ChEBI" id="CHEBI:30616"/>
        <dbReference type="ChEBI" id="CHEBI:43474"/>
        <dbReference type="ChEBI" id="CHEBI:57973"/>
        <dbReference type="ChEBI" id="CHEBI:456216"/>
    </reaction>
    <physiologicalReaction direction="left-to-right" evidence="11">
        <dbReference type="Rhea" id="RHEA:38964"/>
    </physiologicalReaction>
</comment>
<comment type="biophysicochemical properties">
    <kinetics>
        <KM evidence="8">0.057 mM for leukotriene C4</KM>
        <KM evidence="8">3.3 mM for ATP</KM>
        <KM evidence="5">57.8 uM for 17-beta-estradiol 17-(beta-D-glucuronide) (at 37 degrees Celsius)</KM>
        <Vmax evidence="5">20.0 pmol/min/mg enzyme toward 17-beta-estradiol 17-(beta-D-glucuronide) (at 37 degrees Celsius)</Vmax>
    </kinetics>
    <phDependence>
        <text evidence="8">Optimum pH is 7.5.</text>
    </phDependence>
</comment>
<comment type="subcellular location">
    <subcellularLocation>
        <location evidence="6 7">Cell membrane</location>
        <topology evidence="3 6 7">Multi-pass membrane protein</topology>
    </subcellularLocation>
    <subcellularLocation>
        <location evidence="8">Basolateral cell membrane</location>
        <topology evidence="1">Multi-pass membrane protein</topology>
    </subcellularLocation>
    <subcellularLocation>
        <location evidence="9">Basal cell membrane</location>
        <topology evidence="1">Multi-pass membrane protein</topology>
    </subcellularLocation>
    <text evidence="9">Localized to the basal membrane of Sertoli cells.</text>
</comment>
<comment type="alternative products">
    <event type="alternative splicing"/>
    <isoform>
        <id>Q5T3U5-1</id>
        <name>1</name>
        <name>Mrp7</name>
        <sequence type="displayed"/>
    </isoform>
    <isoform>
        <id>Q5T3U5-2</id>
        <name>2</name>
        <name>Mrp7A</name>
        <sequence type="described" ref="VSP_021078 VSP_021079 VSP_021080"/>
    </isoform>
</comment>
<comment type="tissue specificity">
    <text evidence="9">In testis, localized to peritubular myoid cells, Leydig cells, along the basal membrane of Sertoli cells, moderately in the adluminal compartment of the seminiferous tubules, and in vascular endothelial cells.</text>
</comment>
<comment type="tissue specificity">
    <molecule>Isoform 1</molecule>
    <text evidence="6">Specifically expressed in spleen.</text>
</comment>
<comment type="tissue specificity">
    <molecule>Isoform 2</molecule>
    <text evidence="6">Widely expressed.</text>
</comment>
<comment type="similarity">
    <text evidence="11">Belongs to the ABC transporter superfamily. ABCC family. Conjugate transporter (TC 3.A.1.208) subfamily.</text>
</comment>
<comment type="sequence caution" evidence="11">
    <conflict type="erroneous initiation">
        <sequence resource="EMBL-CDS" id="BAA92227"/>
    </conflict>
</comment>
<comment type="sequence caution" evidence="11">
    <conflict type="miscellaneous discrepancy">
        <sequence resource="EMBL-CDS" id="BAB15736"/>
    </conflict>
    <text>Intron retention.</text>
</comment>
<comment type="online information" name="ABCMdb">
    <link uri="http://abcm2.hegelab.org/search"/>
    <text>Database for mutations in ABC proteins</text>
</comment>
<keyword id="KW-0025">Alternative splicing</keyword>
<keyword id="KW-0067">ATP-binding</keyword>
<keyword id="KW-1003">Cell membrane</keyword>
<keyword id="KW-0445">Lipid transport</keyword>
<keyword id="KW-0472">Membrane</keyword>
<keyword id="KW-0547">Nucleotide-binding</keyword>
<keyword id="KW-0597">Phosphoprotein</keyword>
<keyword id="KW-1267">Proteomics identification</keyword>
<keyword id="KW-1185">Reference proteome</keyword>
<keyword id="KW-0677">Repeat</keyword>
<keyword id="KW-1278">Translocase</keyword>
<keyword id="KW-0812">Transmembrane</keyword>
<keyword id="KW-1133">Transmembrane helix</keyword>
<keyword id="KW-0813">Transport</keyword>
<gene>
    <name type="primary">ABCC10</name>
    <name type="synonym">MRP7</name>
    <name type="synonym">SIMRP7</name>
</gene>
<protein>
    <recommendedName>
        <fullName>ATP-binding cassette sub-family C member 10</fullName>
        <ecNumber evidence="7">7.6.2.2</ecNumber>
        <ecNumber evidence="8">7.6.2.3</ecNumber>
    </recommendedName>
    <alternativeName>
        <fullName>Multidrug resistance-associated protein 7</fullName>
    </alternativeName>
</protein>
<reference key="1">
    <citation type="journal article" date="2003" name="J. Biomed. Sci.">
        <title>Genomic structure, gene expression, and promoter analysis of human multidrug resistance-associated protein 7.</title>
        <authorList>
            <person name="Kao H.-H."/>
            <person name="Chang M.-S."/>
            <person name="Cheng J.-F."/>
            <person name="Huang J.-D."/>
        </authorList>
    </citation>
    <scope>NUCLEOTIDE SEQUENCE [MRNA] (ISOFORM 2)</scope>
    <scope>TISSUE SPECIFICITY</scope>
    <scope>SUBCELLULAR LOCATION</scope>
    <source>
        <tissue>Small intestine</tissue>
    </source>
</reference>
<reference key="2">
    <citation type="journal article" date="2000" name="DNA Res.">
        <title>Characterization of long cDNA clones from human adult spleen.</title>
        <authorList>
            <person name="Hattori A."/>
            <person name="Okumura K."/>
            <person name="Nagase T."/>
            <person name="Kikuno R."/>
            <person name="Hirosawa M."/>
            <person name="Ohara O."/>
        </authorList>
    </citation>
    <scope>NUCLEOTIDE SEQUENCE [LARGE SCALE MRNA] (ISOFORM 1)</scope>
    <source>
        <tissue>Spleen</tissue>
    </source>
</reference>
<reference key="3">
    <citation type="journal article" date="2003" name="Nature">
        <title>The DNA sequence and analysis of human chromosome 6.</title>
        <authorList>
            <person name="Mungall A.J."/>
            <person name="Palmer S.A."/>
            <person name="Sims S.K."/>
            <person name="Edwards C.A."/>
            <person name="Ashurst J.L."/>
            <person name="Wilming L."/>
            <person name="Jones M.C."/>
            <person name="Horton R."/>
            <person name="Hunt S.E."/>
            <person name="Scott C.E."/>
            <person name="Gilbert J.G.R."/>
            <person name="Clamp M.E."/>
            <person name="Bethel G."/>
            <person name="Milne S."/>
            <person name="Ainscough R."/>
            <person name="Almeida J.P."/>
            <person name="Ambrose K.D."/>
            <person name="Andrews T.D."/>
            <person name="Ashwell R.I.S."/>
            <person name="Babbage A.K."/>
            <person name="Bagguley C.L."/>
            <person name="Bailey J."/>
            <person name="Banerjee R."/>
            <person name="Barker D.J."/>
            <person name="Barlow K.F."/>
            <person name="Bates K."/>
            <person name="Beare D.M."/>
            <person name="Beasley H."/>
            <person name="Beasley O."/>
            <person name="Bird C.P."/>
            <person name="Blakey S.E."/>
            <person name="Bray-Allen S."/>
            <person name="Brook J."/>
            <person name="Brown A.J."/>
            <person name="Brown J.Y."/>
            <person name="Burford D.C."/>
            <person name="Burrill W."/>
            <person name="Burton J."/>
            <person name="Carder C."/>
            <person name="Carter N.P."/>
            <person name="Chapman J.C."/>
            <person name="Clark S.Y."/>
            <person name="Clark G."/>
            <person name="Clee C.M."/>
            <person name="Clegg S."/>
            <person name="Cobley V."/>
            <person name="Collier R.E."/>
            <person name="Collins J.E."/>
            <person name="Colman L.K."/>
            <person name="Corby N.R."/>
            <person name="Coville G.J."/>
            <person name="Culley K.M."/>
            <person name="Dhami P."/>
            <person name="Davies J."/>
            <person name="Dunn M."/>
            <person name="Earthrowl M.E."/>
            <person name="Ellington A.E."/>
            <person name="Evans K.A."/>
            <person name="Faulkner L."/>
            <person name="Francis M.D."/>
            <person name="Frankish A."/>
            <person name="Frankland J."/>
            <person name="French L."/>
            <person name="Garner P."/>
            <person name="Garnett J."/>
            <person name="Ghori M.J."/>
            <person name="Gilby L.M."/>
            <person name="Gillson C.J."/>
            <person name="Glithero R.J."/>
            <person name="Grafham D.V."/>
            <person name="Grant M."/>
            <person name="Gribble S."/>
            <person name="Griffiths C."/>
            <person name="Griffiths M.N.D."/>
            <person name="Hall R."/>
            <person name="Halls K.S."/>
            <person name="Hammond S."/>
            <person name="Harley J.L."/>
            <person name="Hart E.A."/>
            <person name="Heath P.D."/>
            <person name="Heathcott R."/>
            <person name="Holmes S.J."/>
            <person name="Howden P.J."/>
            <person name="Howe K.L."/>
            <person name="Howell G.R."/>
            <person name="Huckle E."/>
            <person name="Humphray S.J."/>
            <person name="Humphries M.D."/>
            <person name="Hunt A.R."/>
            <person name="Johnson C.M."/>
            <person name="Joy A.A."/>
            <person name="Kay M."/>
            <person name="Keenan S.J."/>
            <person name="Kimberley A.M."/>
            <person name="King A."/>
            <person name="Laird G.K."/>
            <person name="Langford C."/>
            <person name="Lawlor S."/>
            <person name="Leongamornlert D.A."/>
            <person name="Leversha M."/>
            <person name="Lloyd C.R."/>
            <person name="Lloyd D.M."/>
            <person name="Loveland J.E."/>
            <person name="Lovell J."/>
            <person name="Martin S."/>
            <person name="Mashreghi-Mohammadi M."/>
            <person name="Maslen G.L."/>
            <person name="Matthews L."/>
            <person name="McCann O.T."/>
            <person name="McLaren S.J."/>
            <person name="McLay K."/>
            <person name="McMurray A."/>
            <person name="Moore M.J.F."/>
            <person name="Mullikin J.C."/>
            <person name="Niblett D."/>
            <person name="Nickerson T."/>
            <person name="Novik K.L."/>
            <person name="Oliver K."/>
            <person name="Overton-Larty E.K."/>
            <person name="Parker A."/>
            <person name="Patel R."/>
            <person name="Pearce A.V."/>
            <person name="Peck A.I."/>
            <person name="Phillimore B.J.C.T."/>
            <person name="Phillips S."/>
            <person name="Plumb R.W."/>
            <person name="Porter K.M."/>
            <person name="Ramsey Y."/>
            <person name="Ranby S.A."/>
            <person name="Rice C.M."/>
            <person name="Ross M.T."/>
            <person name="Searle S.M."/>
            <person name="Sehra H.K."/>
            <person name="Sheridan E."/>
            <person name="Skuce C.D."/>
            <person name="Smith S."/>
            <person name="Smith M."/>
            <person name="Spraggon L."/>
            <person name="Squares S.L."/>
            <person name="Steward C.A."/>
            <person name="Sycamore N."/>
            <person name="Tamlyn-Hall G."/>
            <person name="Tester J."/>
            <person name="Theaker A.J."/>
            <person name="Thomas D.W."/>
            <person name="Thorpe A."/>
            <person name="Tracey A."/>
            <person name="Tromans A."/>
            <person name="Tubby B."/>
            <person name="Wall M."/>
            <person name="Wallis J.M."/>
            <person name="West A.P."/>
            <person name="White S.S."/>
            <person name="Whitehead S.L."/>
            <person name="Whittaker H."/>
            <person name="Wild A."/>
            <person name="Willey D.J."/>
            <person name="Wilmer T.E."/>
            <person name="Wood J.M."/>
            <person name="Wray P.W."/>
            <person name="Wyatt J.C."/>
            <person name="Young L."/>
            <person name="Younger R.M."/>
            <person name="Bentley D.R."/>
            <person name="Coulson A."/>
            <person name="Durbin R.M."/>
            <person name="Hubbard T."/>
            <person name="Sulston J.E."/>
            <person name="Dunham I."/>
            <person name="Rogers J."/>
            <person name="Beck S."/>
        </authorList>
    </citation>
    <scope>NUCLEOTIDE SEQUENCE [LARGE SCALE GENOMIC DNA]</scope>
</reference>
<reference key="4">
    <citation type="journal article" date="2007" name="BMC Genomics">
        <title>The full-ORF clone resource of the German cDNA consortium.</title>
        <authorList>
            <person name="Bechtel S."/>
            <person name="Rosenfelder H."/>
            <person name="Duda A."/>
            <person name="Schmidt C.P."/>
            <person name="Ernst U."/>
            <person name="Wellenreuther R."/>
            <person name="Mehrle A."/>
            <person name="Schuster C."/>
            <person name="Bahr A."/>
            <person name="Bloecker H."/>
            <person name="Heubner D."/>
            <person name="Hoerlein A."/>
            <person name="Michel G."/>
            <person name="Wedler H."/>
            <person name="Koehrer K."/>
            <person name="Ottenwaelder B."/>
            <person name="Poustka A."/>
            <person name="Wiemann S."/>
            <person name="Schupp I."/>
        </authorList>
    </citation>
    <scope>NUCLEOTIDE SEQUENCE [LARGE SCALE MRNA] OF 793-1492 (ISOFORMS 1/2)</scope>
    <source>
        <tissue>Testis</tissue>
    </source>
</reference>
<reference key="5">
    <citation type="journal article" date="2003" name="Mol. Pharmacol.">
        <title>Characterization of the transport properties of human multidrug resistance protein 7 (MRP7, ABCC10).</title>
        <authorList>
            <person name="Chen Z.-S."/>
            <person name="Hopper-Borge E."/>
            <person name="Belinsky M.G."/>
            <person name="Shchaveleva I."/>
            <person name="Kotova E."/>
            <person name="Kruh G.D."/>
        </authorList>
    </citation>
    <scope>FUNCTION</scope>
    <scope>BIOPHYSICOCHEMICAL PROPERTIES</scope>
    <scope>CATALYTIC ACTIVITY</scope>
</reference>
<reference key="6">
    <citation type="journal article" date="2004" name="Cancer Res.">
        <title>Analysis of the drug resistance profile of multidrug resistance protein 7 (ABCC10): resistance to docetaxel.</title>
        <authorList>
            <person name="Hopper-Borge E."/>
            <person name="Chen Z.-S."/>
            <person name="Shchaveleva I."/>
            <person name="Belinsky M.G."/>
            <person name="Kruh G.D."/>
        </authorList>
    </citation>
    <scope>FUNCTION</scope>
    <scope>SUBCELLULAR LOCATION</scope>
    <scope>CATALYTIC ACTIVITY</scope>
</reference>
<reference key="7">
    <citation type="journal article" date="2008" name="J. Proteome Res.">
        <title>Combining protein-based IMAC, peptide-based IMAC, and MudPIT for efficient phosphoproteomic analysis.</title>
        <authorList>
            <person name="Cantin G.T."/>
            <person name="Yi W."/>
            <person name="Lu B."/>
            <person name="Park S.K."/>
            <person name="Xu T."/>
            <person name="Lee J.-D."/>
            <person name="Yates J.R. III"/>
        </authorList>
    </citation>
    <scope>PHOSPHORYLATION [LARGE SCALE ANALYSIS] AT THR-463 AND SER-467</scope>
    <scope>IDENTIFICATION BY MASS SPECTROMETRY [LARGE SCALE ANALYSIS]</scope>
    <source>
        <tissue>Cervix carcinoma</tissue>
    </source>
</reference>
<reference key="8">
    <citation type="journal article" date="2012" name="Cancer Res.">
        <title>Modulation of the ATPase and transport activities of broad-acting multidrug resistance factor ABCC10 (MRP7).</title>
        <authorList>
            <person name="Malofeeva E.V."/>
            <person name="Domanitskaya N."/>
            <person name="Gudima M."/>
            <person name="Hopper-Borge E.A."/>
        </authorList>
    </citation>
    <scope>SUBCELLULAR LOCATION</scope>
    <scope>FUNCTION</scope>
    <scope>CATALYTIC ACTIVITY</scope>
    <scope>BIOPHYSICOCHEMICAL PROPERTIES</scope>
</reference>
<reference key="9">
    <citation type="journal article" date="2022" name="Drug Metab. Dispos.">
        <title>Localization of Xenobiotic Transporters Expressed at the Human Blood-Testis Barrier.</title>
        <authorList>
            <person name="Hau R.K."/>
            <person name="Klein R.R."/>
            <person name="Wright S.H."/>
            <person name="Cherrington N.J."/>
        </authorList>
    </citation>
    <scope>FUNCTION</scope>
    <scope>SUBCELLULAR LOCATION</scope>
    <scope>TISSUE SPECIFICITY</scope>
</reference>
<sequence length="1492" mass="161629">MERLLAQLCGSSAAWPLPLWEGDTTGHCFTQLVLSALPHALLAVLSACYLGTPRSPDYILPCSPGWRLRLAASFLLSVFPLLDLLPVALPPGAGPGPIGLEVLAGCVAAVAWISHSLALWVLAHSPHGHSRGPLALALVALLPAPALVLTVLWHCQRGTLLPPLLPGPMARLCLLILQLAALLAYALGWAAPGGPREPWAQEPLLPEDQEPEVAEDGESWLSRFSYAWLAPLLARGACGELRQPQDICRLPHRLQPTYLARVFQAHWQEGARLWRALYGAFGRCYLALGLLKLVGTMLGFSGPLLLSLLVGFLEEGQEPLSHGLLYALGLAGGAVLGAVLQNQYGYEVYKVTLQARGAVLNILYCKALQLGPSRPPTGEALNLLGTDSERLLNFAGSFHEAWGLPLQLAITLYLLYQQVGVAFVGGLILALLLVPVNKVIATRIMASNQEMLQHKDARVKLVTELLSGIRVIKFCGWEQALGARVEACRARELGRLRVIKYLDAACVYLWAALPVVISIVIFITYVLMGHQLTATKVFTALALVRMLILPLNNFPWVINGLLEAKVSLDRIQLFLDLPNHNPQAYYSPDPPAEPSTVLELHGALFSWDPVGTSLETFISHLEVKKGMLVGIVGKVGCGKSSLLAAIAGELHRLRGHVAVRGLSKGFGLATQEPWIQFATIRDNILFGKTFDAQLYKEVLEACALNDDLSILPAGDQTEVGEKGVTLSGGQRARIALARAVYQEKELYLLDDPLAAVDADVANHLLHRCILGMLSYTTRLLCTHRTEYLERADAVLLMEAGRLIRAGPPSEILPLVQAVPKAWAENGQESDSATAQSVQNPEKTKEGLEEEQSTSGRLLQEESKKEGAVALHVYQAYWKAVGQGLALAILFSLLLMQATRNAADWWLSHWISQLKAENSSQEAQPSTSPASMGLFSPQLLLFSPGNLYIPVFPLPKAAPNGSSDIRFYLTVYATIAGVNSLCTLLRAVLFAAGTLQAAATLHRRLLHRVLMAPVTFFNATPTGRILNRFSSDVACADDSLPFILNILLANAAGLLGLLAVLGSGLPWLLLLLPPLSIMYYHVQRHYRASSRELRRLGSLTLSPLYSHLADTLAGLSVLRATGATYRFEEENLRLLELNQRCQFATSATMQWLDIRLQLMGAAVVSAIAGIALVQHQQGLANPGLVGLSLSYALSLTGLLSGLVSSFTQTEAMLVSVERLEEYTCDLPQEPQGQPLQLGTGWLTQGGVEFQDVVLAYRPGLPNALDGVTFCVQPGEKLGIVGRTGSGKSSLLLVLFRLLEPSSGRVLLDGVDTSQLELAQLRSQLAIIPQEPFLFSGTVRENLDPQGLHKDRALWQALKQCHLSEVITSMGGLDGELGEGGRSLSLGQRQLLCLARALLTDAKILCIDEATASVDQKTDQLLQQTICKRFANKTVLTIAHRLNTILNSDRVLVLQAGRVVELDSPATLRNQPHSLFQQLLQSSQQGVPASLGGP</sequence>
<dbReference type="EC" id="7.6.2.2" evidence="7"/>
<dbReference type="EC" id="7.6.2.3" evidence="8"/>
<dbReference type="EMBL" id="AY032599">
    <property type="protein sequence ID" value="AAK39642.1"/>
    <property type="molecule type" value="mRNA"/>
</dbReference>
<dbReference type="EMBL" id="AK000002">
    <property type="protein sequence ID" value="BAA92227.1"/>
    <property type="status" value="ALT_INIT"/>
    <property type="molecule type" value="mRNA"/>
</dbReference>
<dbReference type="EMBL" id="AK024446">
    <property type="protein sequence ID" value="BAB15736.1"/>
    <property type="status" value="ALT_SEQ"/>
    <property type="molecule type" value="mRNA"/>
</dbReference>
<dbReference type="EMBL" id="AL359813">
    <property type="status" value="NOT_ANNOTATED_CDS"/>
    <property type="molecule type" value="Genomic_DNA"/>
</dbReference>
<dbReference type="EMBL" id="AL133613">
    <property type="protein sequence ID" value="CAB63742.1"/>
    <property type="molecule type" value="mRNA"/>
</dbReference>
<dbReference type="CCDS" id="CCDS4896.1">
    <molecule id="Q5T3U5-2"/>
</dbReference>
<dbReference type="CCDS" id="CCDS56430.1">
    <molecule id="Q5T3U5-1"/>
</dbReference>
<dbReference type="PIR" id="T43469">
    <property type="entry name" value="T43469"/>
</dbReference>
<dbReference type="RefSeq" id="NP_001185863.1">
    <molecule id="Q5T3U5-1"/>
    <property type="nucleotide sequence ID" value="NM_001198934.2"/>
</dbReference>
<dbReference type="RefSeq" id="NP_258261.2">
    <molecule id="Q5T3U5-2"/>
    <property type="nucleotide sequence ID" value="NM_033450.2"/>
</dbReference>
<dbReference type="RefSeq" id="XP_011513276.3">
    <molecule id="Q5T3U5-1"/>
    <property type="nucleotide sequence ID" value="XM_011514974.4"/>
</dbReference>
<dbReference type="RefSeq" id="XP_047275451.1">
    <molecule id="Q5T3U5-1"/>
    <property type="nucleotide sequence ID" value="XM_047419495.1"/>
</dbReference>
<dbReference type="RefSeq" id="XP_054212677.1">
    <molecule id="Q5T3U5-1"/>
    <property type="nucleotide sequence ID" value="XM_054356702.1"/>
</dbReference>
<dbReference type="SMR" id="Q5T3U5"/>
<dbReference type="BioGRID" id="124617">
    <property type="interactions" value="38"/>
</dbReference>
<dbReference type="FunCoup" id="Q5T3U5">
    <property type="interactions" value="718"/>
</dbReference>
<dbReference type="IntAct" id="Q5T3U5">
    <property type="interactions" value="30"/>
</dbReference>
<dbReference type="STRING" id="9606.ENSP00000361608"/>
<dbReference type="ChEMBL" id="CHEMBL2073687"/>
<dbReference type="DrugBank" id="DB00091">
    <property type="generic name" value="Cyclosporine"/>
</dbReference>
<dbReference type="DrugBank" id="DB00987">
    <property type="generic name" value="Cytarabine"/>
</dbReference>
<dbReference type="DrugBank" id="DB00694">
    <property type="generic name" value="Daunorubicin"/>
</dbReference>
<dbReference type="DrugBank" id="DB01248">
    <property type="generic name" value="Docetaxel"/>
</dbReference>
<dbReference type="DrugBank" id="DB00997">
    <property type="generic name" value="Doxorubicin"/>
</dbReference>
<dbReference type="DrugBank" id="DB00783">
    <property type="generic name" value="Estradiol"/>
</dbReference>
<dbReference type="DrugBank" id="DB13952">
    <property type="generic name" value="Estradiol acetate"/>
</dbReference>
<dbReference type="DrugBank" id="DB13953">
    <property type="generic name" value="Estradiol benzoate"/>
</dbReference>
<dbReference type="DrugBank" id="DB13954">
    <property type="generic name" value="Estradiol cypionate"/>
</dbReference>
<dbReference type="DrugBank" id="DB13955">
    <property type="generic name" value="Estradiol dienanthate"/>
</dbReference>
<dbReference type="DrugBank" id="DB13956">
    <property type="generic name" value="Estradiol valerate"/>
</dbReference>
<dbReference type="DrugBank" id="DB00773">
    <property type="generic name" value="Etoposide"/>
</dbReference>
<dbReference type="DrugBank" id="DB00441">
    <property type="generic name" value="Gemcitabine"/>
</dbReference>
<dbReference type="DrugBank" id="DB00563">
    <property type="generic name" value="Methotrexate"/>
</dbReference>
<dbReference type="DrugBank" id="DB01229">
    <property type="generic name" value="Paclitaxel"/>
</dbReference>
<dbReference type="DrugBank" id="DB00203">
    <property type="generic name" value="Sildenafil"/>
</dbReference>
<dbReference type="DrugBank" id="DB04348">
    <property type="generic name" value="Taurocholic acid"/>
</dbReference>
<dbReference type="DrugBank" id="DB00300">
    <property type="generic name" value="Tenofovir disoproxil"/>
</dbReference>
<dbReference type="DrugBank" id="DB00661">
    <property type="generic name" value="Verapamil"/>
</dbReference>
<dbReference type="DrugBank" id="DB00541">
    <property type="generic name" value="Vincristine"/>
</dbReference>
<dbReference type="DrugCentral" id="Q5T3U5"/>
<dbReference type="TCDB" id="3.A.1.208.31">
    <property type="family name" value="the atp-binding cassette (abc) superfamily"/>
</dbReference>
<dbReference type="GlyGen" id="Q5T3U5">
    <property type="glycosylation" value="3 sites, 1 N-linked glycan (1 site), 1 O-linked glycan (2 sites)"/>
</dbReference>
<dbReference type="iPTMnet" id="Q5T3U5"/>
<dbReference type="PhosphoSitePlus" id="Q5T3U5"/>
<dbReference type="SwissPalm" id="Q5T3U5"/>
<dbReference type="BioMuta" id="ABCC10"/>
<dbReference type="DMDM" id="74756298"/>
<dbReference type="jPOST" id="Q5T3U5"/>
<dbReference type="MassIVE" id="Q5T3U5"/>
<dbReference type="PaxDb" id="9606-ENSP00000361608"/>
<dbReference type="PeptideAtlas" id="Q5T3U5"/>
<dbReference type="ProteomicsDB" id="64416">
    <molecule id="Q5T3U5-1"/>
</dbReference>
<dbReference type="ProteomicsDB" id="64417">
    <molecule id="Q5T3U5-2"/>
</dbReference>
<dbReference type="Antibodypedia" id="30398">
    <property type="antibodies" value="271 antibodies from 30 providers"/>
</dbReference>
<dbReference type="DNASU" id="89845"/>
<dbReference type="Ensembl" id="ENST00000244533.7">
    <molecule id="Q5T3U5-2"/>
    <property type="protein sequence ID" value="ENSP00000244533.3"/>
    <property type="gene ID" value="ENSG00000124574.16"/>
</dbReference>
<dbReference type="Ensembl" id="ENST00000372530.9">
    <molecule id="Q5T3U5-1"/>
    <property type="protein sequence ID" value="ENSP00000361608.4"/>
    <property type="gene ID" value="ENSG00000124574.16"/>
</dbReference>
<dbReference type="GeneID" id="89845"/>
<dbReference type="KEGG" id="hsa:89845"/>
<dbReference type="MANE-Select" id="ENST00000372530.9">
    <property type="protein sequence ID" value="ENSP00000361608.4"/>
    <property type="RefSeq nucleotide sequence ID" value="NM_001198934.2"/>
    <property type="RefSeq protein sequence ID" value="NP_001185863.1"/>
</dbReference>
<dbReference type="UCSC" id="uc003ouy.2">
    <molecule id="Q5T3U5-1"/>
    <property type="organism name" value="human"/>
</dbReference>
<dbReference type="AGR" id="HGNC:52"/>
<dbReference type="CTD" id="89845"/>
<dbReference type="DisGeNET" id="89845"/>
<dbReference type="GeneCards" id="ABCC10"/>
<dbReference type="HGNC" id="HGNC:52">
    <property type="gene designation" value="ABCC10"/>
</dbReference>
<dbReference type="HPA" id="ENSG00000124574">
    <property type="expression patterns" value="Low tissue specificity"/>
</dbReference>
<dbReference type="MalaCards" id="ABCC10"/>
<dbReference type="MIM" id="612509">
    <property type="type" value="gene"/>
</dbReference>
<dbReference type="neXtProt" id="NX_Q5T3U5"/>
<dbReference type="OpenTargets" id="ENSG00000124574"/>
<dbReference type="PharmGKB" id="PA24392"/>
<dbReference type="VEuPathDB" id="HostDB:ENSG00000124574"/>
<dbReference type="eggNOG" id="KOG0054">
    <property type="taxonomic scope" value="Eukaryota"/>
</dbReference>
<dbReference type="GeneTree" id="ENSGT00940000161082"/>
<dbReference type="HOGENOM" id="CLU_000604_27_1_1"/>
<dbReference type="InParanoid" id="Q5T3U5"/>
<dbReference type="OMA" id="PYAWPSQ"/>
<dbReference type="OrthoDB" id="6500128at2759"/>
<dbReference type="PAN-GO" id="Q5T3U5">
    <property type="GO annotations" value="3 GO annotations based on evolutionary models"/>
</dbReference>
<dbReference type="PhylomeDB" id="Q5T3U5"/>
<dbReference type="TreeFam" id="TF105203"/>
<dbReference type="BRENDA" id="7.6.2.2">
    <property type="organism ID" value="2681"/>
</dbReference>
<dbReference type="PathwayCommons" id="Q5T3U5"/>
<dbReference type="Reactome" id="R-HSA-382556">
    <property type="pathway name" value="ABC-family proteins mediated transport"/>
</dbReference>
<dbReference type="SABIO-RK" id="Q5T3U5"/>
<dbReference type="SignaLink" id="Q5T3U5"/>
<dbReference type="BioGRID-ORCS" id="89845">
    <property type="hits" value="11 hits in 1152 CRISPR screens"/>
</dbReference>
<dbReference type="ChiTaRS" id="ABCC10">
    <property type="organism name" value="human"/>
</dbReference>
<dbReference type="GeneWiki" id="ABCC10"/>
<dbReference type="GenomeRNAi" id="89845"/>
<dbReference type="Pharos" id="Q5T3U5">
    <property type="development level" value="Tbio"/>
</dbReference>
<dbReference type="PRO" id="PR:Q5T3U5"/>
<dbReference type="Proteomes" id="UP000005640">
    <property type="component" value="Chromosome 6"/>
</dbReference>
<dbReference type="RNAct" id="Q5T3U5">
    <property type="molecule type" value="protein"/>
</dbReference>
<dbReference type="Bgee" id="ENSG00000124574">
    <property type="expression patterns" value="Expressed in right hemisphere of cerebellum and 192 other cell types or tissues"/>
</dbReference>
<dbReference type="ExpressionAtlas" id="Q5T3U5">
    <property type="expression patterns" value="baseline and differential"/>
</dbReference>
<dbReference type="GO" id="GO:0009925">
    <property type="term" value="C:basal plasma membrane"/>
    <property type="evidence" value="ECO:0000314"/>
    <property type="project" value="UniProtKB"/>
</dbReference>
<dbReference type="GO" id="GO:0016323">
    <property type="term" value="C:basolateral plasma membrane"/>
    <property type="evidence" value="ECO:0000314"/>
    <property type="project" value="UniProtKB"/>
</dbReference>
<dbReference type="GO" id="GO:0005765">
    <property type="term" value="C:lysosomal membrane"/>
    <property type="evidence" value="ECO:0007005"/>
    <property type="project" value="UniProtKB"/>
</dbReference>
<dbReference type="GO" id="GO:0016020">
    <property type="term" value="C:membrane"/>
    <property type="evidence" value="ECO:0000318"/>
    <property type="project" value="GO_Central"/>
</dbReference>
<dbReference type="GO" id="GO:0005886">
    <property type="term" value="C:plasma membrane"/>
    <property type="evidence" value="ECO:0000314"/>
    <property type="project" value="ARUK-UCL"/>
</dbReference>
<dbReference type="GO" id="GO:0015431">
    <property type="term" value="F:ABC-type glutathione S-conjugate transporter activity"/>
    <property type="evidence" value="ECO:0000314"/>
    <property type="project" value="UniProtKB"/>
</dbReference>
<dbReference type="GO" id="GO:0140359">
    <property type="term" value="F:ABC-type transporter activity"/>
    <property type="evidence" value="ECO:0000314"/>
    <property type="project" value="UniProtKB"/>
</dbReference>
<dbReference type="GO" id="GO:0008559">
    <property type="term" value="F:ABC-type xenobiotic transporter activity"/>
    <property type="evidence" value="ECO:0000314"/>
    <property type="project" value="UniProtKB"/>
</dbReference>
<dbReference type="GO" id="GO:0005524">
    <property type="term" value="F:ATP binding"/>
    <property type="evidence" value="ECO:0007669"/>
    <property type="project" value="UniProtKB-KW"/>
</dbReference>
<dbReference type="GO" id="GO:0016887">
    <property type="term" value="F:ATP hydrolysis activity"/>
    <property type="evidence" value="ECO:0007669"/>
    <property type="project" value="InterPro"/>
</dbReference>
<dbReference type="GO" id="GO:0043225">
    <property type="term" value="F:ATPase-coupled inorganic anion transmembrane transporter activity"/>
    <property type="evidence" value="ECO:0000304"/>
    <property type="project" value="Reactome"/>
</dbReference>
<dbReference type="GO" id="GO:0042626">
    <property type="term" value="F:ATPase-coupled transmembrane transporter activity"/>
    <property type="evidence" value="ECO:0000318"/>
    <property type="project" value="GO_Central"/>
</dbReference>
<dbReference type="GO" id="GO:0006691">
    <property type="term" value="P:leukotriene metabolic process"/>
    <property type="evidence" value="ECO:0000314"/>
    <property type="project" value="UniProtKB"/>
</dbReference>
<dbReference type="GO" id="GO:0071716">
    <property type="term" value="P:leukotriene transport"/>
    <property type="evidence" value="ECO:0000314"/>
    <property type="project" value="UniProtKB"/>
</dbReference>
<dbReference type="GO" id="GO:0006869">
    <property type="term" value="P:lipid transport"/>
    <property type="evidence" value="ECO:0007669"/>
    <property type="project" value="UniProtKB-KW"/>
</dbReference>
<dbReference type="GO" id="GO:0055085">
    <property type="term" value="P:transmembrane transport"/>
    <property type="evidence" value="ECO:0000318"/>
    <property type="project" value="GO_Central"/>
</dbReference>
<dbReference type="CDD" id="cd18598">
    <property type="entry name" value="ABC_6TM_MRP7_D1_like"/>
    <property type="match status" value="1"/>
</dbReference>
<dbReference type="CDD" id="cd18605">
    <property type="entry name" value="ABC_6TM_MRP7_D2_like"/>
    <property type="match status" value="1"/>
</dbReference>
<dbReference type="CDD" id="cd03250">
    <property type="entry name" value="ABCC_MRP_domain1"/>
    <property type="match status" value="1"/>
</dbReference>
<dbReference type="CDD" id="cd03244">
    <property type="entry name" value="ABCC_MRP_domain2"/>
    <property type="match status" value="1"/>
</dbReference>
<dbReference type="FunFam" id="1.20.1560.10:FF:000037">
    <property type="entry name" value="ATP-binding cassette subfamily C member 10"/>
    <property type="match status" value="1"/>
</dbReference>
<dbReference type="FunFam" id="3.40.50.300:FF:001090">
    <property type="entry name" value="ATP-binding cassette subfamily C member 10"/>
    <property type="match status" value="1"/>
</dbReference>
<dbReference type="FunFam" id="3.40.50.300:FF:000163">
    <property type="entry name" value="Multidrug resistance-associated protein member 4"/>
    <property type="match status" value="1"/>
</dbReference>
<dbReference type="Gene3D" id="1.20.1560.10">
    <property type="entry name" value="ABC transporter type 1, transmembrane domain"/>
    <property type="match status" value="2"/>
</dbReference>
<dbReference type="Gene3D" id="3.40.50.300">
    <property type="entry name" value="P-loop containing nucleotide triphosphate hydrolases"/>
    <property type="match status" value="2"/>
</dbReference>
<dbReference type="InterPro" id="IPR003593">
    <property type="entry name" value="AAA+_ATPase"/>
</dbReference>
<dbReference type="InterPro" id="IPR011527">
    <property type="entry name" value="ABC1_TM_dom"/>
</dbReference>
<dbReference type="InterPro" id="IPR036640">
    <property type="entry name" value="ABC1_TM_sf"/>
</dbReference>
<dbReference type="InterPro" id="IPR003439">
    <property type="entry name" value="ABC_transporter-like_ATP-bd"/>
</dbReference>
<dbReference type="InterPro" id="IPR017871">
    <property type="entry name" value="ABC_transporter-like_CS"/>
</dbReference>
<dbReference type="InterPro" id="IPR050173">
    <property type="entry name" value="ABC_transporter_C-like"/>
</dbReference>
<dbReference type="InterPro" id="IPR027417">
    <property type="entry name" value="P-loop_NTPase"/>
</dbReference>
<dbReference type="PANTHER" id="PTHR24223">
    <property type="entry name" value="ATP-BINDING CASSETTE SUB-FAMILY C"/>
    <property type="match status" value="1"/>
</dbReference>
<dbReference type="PANTHER" id="PTHR24223:SF330">
    <property type="entry name" value="ATP-BINDING CASSETTE SUB-FAMILY C MEMBER 10"/>
    <property type="match status" value="1"/>
</dbReference>
<dbReference type="Pfam" id="PF00664">
    <property type="entry name" value="ABC_membrane"/>
    <property type="match status" value="2"/>
</dbReference>
<dbReference type="Pfam" id="PF00005">
    <property type="entry name" value="ABC_tran"/>
    <property type="match status" value="2"/>
</dbReference>
<dbReference type="SMART" id="SM00382">
    <property type="entry name" value="AAA"/>
    <property type="match status" value="2"/>
</dbReference>
<dbReference type="SUPFAM" id="SSF90123">
    <property type="entry name" value="ABC transporter transmembrane region"/>
    <property type="match status" value="2"/>
</dbReference>
<dbReference type="SUPFAM" id="SSF52540">
    <property type="entry name" value="P-loop containing nucleoside triphosphate hydrolases"/>
    <property type="match status" value="2"/>
</dbReference>
<dbReference type="PROSITE" id="PS50929">
    <property type="entry name" value="ABC_TM1F"/>
    <property type="match status" value="2"/>
</dbReference>
<dbReference type="PROSITE" id="PS00211">
    <property type="entry name" value="ABC_TRANSPORTER_1"/>
    <property type="match status" value="2"/>
</dbReference>
<dbReference type="PROSITE" id="PS50893">
    <property type="entry name" value="ABC_TRANSPORTER_2"/>
    <property type="match status" value="2"/>
</dbReference>
<proteinExistence type="evidence at protein level"/>
<evidence type="ECO:0000255" key="1"/>
<evidence type="ECO:0000255" key="2">
    <source>
        <dbReference type="PROSITE-ProRule" id="PRU00434"/>
    </source>
</evidence>
<evidence type="ECO:0000255" key="3">
    <source>
        <dbReference type="PROSITE-ProRule" id="PRU00441"/>
    </source>
</evidence>
<evidence type="ECO:0000256" key="4">
    <source>
        <dbReference type="SAM" id="MobiDB-lite"/>
    </source>
</evidence>
<evidence type="ECO:0000269" key="5">
    <source>
    </source>
</evidence>
<evidence type="ECO:0000269" key="6">
    <source>
    </source>
</evidence>
<evidence type="ECO:0000269" key="7">
    <source>
    </source>
</evidence>
<evidence type="ECO:0000269" key="8">
    <source>
    </source>
</evidence>
<evidence type="ECO:0000269" key="9">
    <source>
    </source>
</evidence>
<evidence type="ECO:0000303" key="10">
    <source>
    </source>
</evidence>
<evidence type="ECO:0000305" key="11"/>
<evidence type="ECO:0000305" key="12">
    <source>
    </source>
</evidence>
<evidence type="ECO:0000305" key="13">
    <source>
    </source>
</evidence>
<evidence type="ECO:0007744" key="14">
    <source>
    </source>
</evidence>
<organism>
    <name type="scientific">Homo sapiens</name>
    <name type="common">Human</name>
    <dbReference type="NCBI Taxonomy" id="9606"/>
    <lineage>
        <taxon>Eukaryota</taxon>
        <taxon>Metazoa</taxon>
        <taxon>Chordata</taxon>
        <taxon>Craniata</taxon>
        <taxon>Vertebrata</taxon>
        <taxon>Euteleostomi</taxon>
        <taxon>Mammalia</taxon>
        <taxon>Eutheria</taxon>
        <taxon>Euarchontoglires</taxon>
        <taxon>Primates</taxon>
        <taxon>Haplorrhini</taxon>
        <taxon>Catarrhini</taxon>
        <taxon>Hominidae</taxon>
        <taxon>Homo</taxon>
    </lineage>
</organism>
<feature type="chain" id="PRO_0000253576" description="ATP-binding cassette sub-family C member 10">
    <location>
        <begin position="1"/>
        <end position="1492"/>
    </location>
</feature>
<feature type="transmembrane region" description="Helical" evidence="3">
    <location>
        <begin position="32"/>
        <end position="52"/>
    </location>
</feature>
<feature type="transmembrane region" description="Helical" evidence="3">
    <location>
        <begin position="70"/>
        <end position="90"/>
    </location>
</feature>
<feature type="transmembrane region" description="Helical" evidence="3">
    <location>
        <begin position="102"/>
        <end position="122"/>
    </location>
</feature>
<feature type="transmembrane region" description="Helical" evidence="3">
    <location>
        <begin position="133"/>
        <end position="153"/>
    </location>
</feature>
<feature type="transmembrane region" description="Helical" evidence="3">
    <location>
        <begin position="172"/>
        <end position="192"/>
    </location>
</feature>
<feature type="transmembrane region" description="Helical" evidence="3">
    <location>
        <begin position="293"/>
        <end position="313"/>
    </location>
</feature>
<feature type="transmembrane region" description="Helical" evidence="3">
    <location>
        <begin position="320"/>
        <end position="340"/>
    </location>
</feature>
<feature type="transmembrane region" description="Helical" evidence="3">
    <location>
        <begin position="391"/>
        <end position="411"/>
    </location>
</feature>
<feature type="transmembrane region" description="Helical" evidence="3">
    <location>
        <begin position="414"/>
        <end position="434"/>
    </location>
</feature>
<feature type="transmembrane region" description="Helical" evidence="3">
    <location>
        <begin position="507"/>
        <end position="527"/>
    </location>
</feature>
<feature type="transmembrane region" description="Helical" evidence="3">
    <location>
        <begin position="538"/>
        <end position="558"/>
    </location>
</feature>
<feature type="transmembrane region" description="Helical" evidence="3">
    <location>
        <begin position="875"/>
        <end position="895"/>
    </location>
</feature>
<feature type="transmembrane region" description="Helical" evidence="3">
    <location>
        <begin position="933"/>
        <end position="953"/>
    </location>
</feature>
<feature type="transmembrane region" description="Helical" evidence="3">
    <location>
        <begin position="974"/>
        <end position="994"/>
    </location>
</feature>
<feature type="transmembrane region" description="Helical" evidence="3">
    <location>
        <begin position="1051"/>
        <end position="1071"/>
    </location>
</feature>
<feature type="transmembrane region" description="Helical" evidence="3">
    <location>
        <begin position="1153"/>
        <end position="1173"/>
    </location>
</feature>
<feature type="transmembrane region" description="Helical" evidence="3">
    <location>
        <begin position="1182"/>
        <end position="1202"/>
    </location>
</feature>
<feature type="domain" description="ABC transmembrane type-1 1" evidence="3">
    <location>
        <begin position="285"/>
        <end position="563"/>
    </location>
</feature>
<feature type="domain" description="ABC transporter 1" evidence="2">
    <location>
        <begin position="598"/>
        <end position="824"/>
    </location>
</feature>
<feature type="domain" description="ABC transmembrane type-1 2" evidence="3">
    <location>
        <begin position="885"/>
        <end position="1210"/>
    </location>
</feature>
<feature type="domain" description="ABC transporter 2" evidence="2">
    <location>
        <begin position="1246"/>
        <end position="1479"/>
    </location>
</feature>
<feature type="region of interest" description="Disordered" evidence="4">
    <location>
        <begin position="825"/>
        <end position="860"/>
    </location>
</feature>
<feature type="compositionally biased region" description="Polar residues" evidence="4">
    <location>
        <begin position="826"/>
        <end position="840"/>
    </location>
</feature>
<feature type="binding site" evidence="2">
    <location>
        <begin position="633"/>
        <end position="640"/>
    </location>
    <ligand>
        <name>ATP</name>
        <dbReference type="ChEBI" id="CHEBI:30616"/>
        <label>1</label>
    </ligand>
</feature>
<feature type="binding site" evidence="2">
    <location>
        <begin position="1280"/>
        <end position="1287"/>
    </location>
    <ligand>
        <name>ATP</name>
        <dbReference type="ChEBI" id="CHEBI:30616"/>
        <label>2</label>
    </ligand>
</feature>
<feature type="modified residue" description="Phosphothreonine" evidence="14">
    <location>
        <position position="463"/>
    </location>
</feature>
<feature type="modified residue" description="Phosphoserine" evidence="14">
    <location>
        <position position="467"/>
    </location>
</feature>
<feature type="splice variant" id="VSP_021078" description="In isoform 2." evidence="10">
    <location>
        <begin position="1"/>
        <end position="43"/>
    </location>
</feature>
<feature type="splice variant" id="VSP_021079" description="In isoform 2." evidence="10">
    <original>VLSACYLGT</original>
    <variation>MCLLVFPLV</variation>
    <location>
        <begin position="44"/>
        <end position="52"/>
    </location>
</feature>
<feature type="splice variant" id="VSP_021080" description="In isoform 2." evidence="10">
    <original>P</original>
    <variation>PDCGRLGAQIKWLLCS</variation>
    <location>
        <position position="588"/>
    </location>
</feature>
<feature type="sequence variant" id="VAR_028391" description="In dbSNP:rs2125739.">
    <original>I</original>
    <variation>T</variation>
    <location>
        <position position="948"/>
    </location>
</feature>
<feature type="sequence conflict" description="In Ref. 1; AAK39642." evidence="11" ref="1">
    <original>D</original>
    <variation>E</variation>
    <location>
        <position position="208"/>
    </location>
</feature>
<feature type="sequence conflict" description="In Ref. 1; AAK39642." evidence="11" ref="1">
    <location>
        <position position="220"/>
    </location>
</feature>
<feature type="sequence conflict" description="In Ref. 1; AAK39642." evidence="11" ref="1">
    <original>I</original>
    <variation>T</variation>
    <location>
        <position position="631"/>
    </location>
</feature>
<feature type="sequence conflict" description="In Ref. 1; AAK39642." evidence="11" ref="1">
    <original>L</original>
    <variation>P</variation>
    <location>
        <position position="764"/>
    </location>
</feature>
<feature type="sequence conflict" description="In Ref. 1; AAK39642." evidence="11" ref="1">
    <original>S</original>
    <variation>P</variation>
    <location>
        <position position="809"/>
    </location>
</feature>
<feature type="sequence conflict" description="In Ref. 1; AAK39642." evidence="11" ref="1">
    <original>I</original>
    <variation>T</variation>
    <location>
        <position position="888"/>
    </location>
</feature>
<feature type="sequence conflict" description="In Ref. 1; AAK39642." evidence="11" ref="1">
    <original>S</original>
    <variation>F</variation>
    <location>
        <position position="1030"/>
    </location>
</feature>
<feature type="sequence conflict" description="In Ref. 2; BAB15736." evidence="11" ref="2">
    <original>L</original>
    <variation>F</variation>
    <location>
        <position position="1134"/>
    </location>
</feature>
<feature type="sequence conflict" description="In Ref. 1; AAK39642." evidence="11" ref="1">
    <original>L</original>
    <variation>V</variation>
    <location>
        <position position="1276"/>
    </location>
</feature>
<feature type="sequence conflict" description="In Ref. 1; AAK39642." evidence="11" ref="1">
    <original>G</original>
    <variation>E</variation>
    <location>
        <position position="1455"/>
    </location>
</feature>
<feature type="sequence conflict" description="In Ref. 1; AAK39642." evidence="11" ref="1">
    <original>S</original>
    <variation>C</variation>
    <location>
        <position position="1481"/>
    </location>
</feature>
<feature type="sequence conflict" description="In Ref. 1; AAK39642." evidence="11" ref="1">
    <original>G</original>
    <variation>R</variation>
    <location>
        <position position="1490"/>
    </location>
</feature>